<dbReference type="EC" id="2.5.1.7" evidence="1"/>
<dbReference type="EMBL" id="CP001391">
    <property type="protein sequence ID" value="ACN95863.1"/>
    <property type="molecule type" value="Genomic_DNA"/>
</dbReference>
<dbReference type="RefSeq" id="WP_007549225.1">
    <property type="nucleotide sequence ID" value="NZ_MKIF01000094.1"/>
</dbReference>
<dbReference type="SMR" id="C0R4M1"/>
<dbReference type="STRING" id="66084.WRi_011710"/>
<dbReference type="KEGG" id="wri:WRi_011710"/>
<dbReference type="HOGENOM" id="CLU_027387_0_0_5"/>
<dbReference type="UniPathway" id="UPA00219"/>
<dbReference type="Proteomes" id="UP000001293">
    <property type="component" value="Chromosome"/>
</dbReference>
<dbReference type="GO" id="GO:0005737">
    <property type="term" value="C:cytoplasm"/>
    <property type="evidence" value="ECO:0007669"/>
    <property type="project" value="UniProtKB-SubCell"/>
</dbReference>
<dbReference type="GO" id="GO:0008760">
    <property type="term" value="F:UDP-N-acetylglucosamine 1-carboxyvinyltransferase activity"/>
    <property type="evidence" value="ECO:0007669"/>
    <property type="project" value="UniProtKB-UniRule"/>
</dbReference>
<dbReference type="GO" id="GO:0051301">
    <property type="term" value="P:cell division"/>
    <property type="evidence" value="ECO:0007669"/>
    <property type="project" value="UniProtKB-KW"/>
</dbReference>
<dbReference type="GO" id="GO:0071555">
    <property type="term" value="P:cell wall organization"/>
    <property type="evidence" value="ECO:0007669"/>
    <property type="project" value="UniProtKB-KW"/>
</dbReference>
<dbReference type="GO" id="GO:0009252">
    <property type="term" value="P:peptidoglycan biosynthetic process"/>
    <property type="evidence" value="ECO:0007669"/>
    <property type="project" value="UniProtKB-UniRule"/>
</dbReference>
<dbReference type="GO" id="GO:0008360">
    <property type="term" value="P:regulation of cell shape"/>
    <property type="evidence" value="ECO:0007669"/>
    <property type="project" value="UniProtKB-KW"/>
</dbReference>
<dbReference type="GO" id="GO:0019277">
    <property type="term" value="P:UDP-N-acetylgalactosamine biosynthetic process"/>
    <property type="evidence" value="ECO:0007669"/>
    <property type="project" value="InterPro"/>
</dbReference>
<dbReference type="CDD" id="cd01555">
    <property type="entry name" value="UdpNAET"/>
    <property type="match status" value="1"/>
</dbReference>
<dbReference type="Gene3D" id="3.65.10.10">
    <property type="entry name" value="Enolpyruvate transferase domain"/>
    <property type="match status" value="2"/>
</dbReference>
<dbReference type="HAMAP" id="MF_00111">
    <property type="entry name" value="MurA"/>
    <property type="match status" value="1"/>
</dbReference>
<dbReference type="InterPro" id="IPR001986">
    <property type="entry name" value="Enolpyruvate_Tfrase_dom"/>
</dbReference>
<dbReference type="InterPro" id="IPR036968">
    <property type="entry name" value="Enolpyruvate_Tfrase_sf"/>
</dbReference>
<dbReference type="InterPro" id="IPR050068">
    <property type="entry name" value="MurA_subfamily"/>
</dbReference>
<dbReference type="InterPro" id="IPR013792">
    <property type="entry name" value="RNA3'P_cycl/enolpyr_Trfase_a/b"/>
</dbReference>
<dbReference type="InterPro" id="IPR005750">
    <property type="entry name" value="UDP_GlcNAc_COvinyl_MurA"/>
</dbReference>
<dbReference type="NCBIfam" id="TIGR01072">
    <property type="entry name" value="murA"/>
    <property type="match status" value="1"/>
</dbReference>
<dbReference type="NCBIfam" id="NF006873">
    <property type="entry name" value="PRK09369.1"/>
    <property type="match status" value="1"/>
</dbReference>
<dbReference type="PANTHER" id="PTHR43783">
    <property type="entry name" value="UDP-N-ACETYLGLUCOSAMINE 1-CARBOXYVINYLTRANSFERASE"/>
    <property type="match status" value="1"/>
</dbReference>
<dbReference type="PANTHER" id="PTHR43783:SF1">
    <property type="entry name" value="UDP-N-ACETYLGLUCOSAMINE 1-CARBOXYVINYLTRANSFERASE"/>
    <property type="match status" value="1"/>
</dbReference>
<dbReference type="Pfam" id="PF00275">
    <property type="entry name" value="EPSP_synthase"/>
    <property type="match status" value="1"/>
</dbReference>
<dbReference type="SUPFAM" id="SSF55205">
    <property type="entry name" value="EPT/RTPC-like"/>
    <property type="match status" value="1"/>
</dbReference>
<sequence length="425" mass="45868">MHKILIRNNYKPLVGKIKINGSKNAVLPIMAASLLSSSPVILHNVPDLIDVHLMSKLLESLGAEVNFMHNKNYKANHTLKIDCSNINNHVMPYKTASKLRTSFLILGPMLSRFGKARTAFPGGCNIGKRPVDMHIKALEEMGAKIEIDGYNIIATVKGKLQGKEITFEKISVGATENVIMAATFAEGVTTINNAATEPEVLDLIDFLKKMGADIEIDNTKVVITGVEALNGCVHKIIPDRIEAGTYALAAIITGGKLELEGINLSDIRCITNELETIGAMVELYDGGIVISRKNGSIKSANVATDPYPNFPSDMQPQLMSAMCIADGISVIEENIFENRFTHADELRKLGANISIEKSKATISGIKSLSGANLYATDLRSTAALVLASLVAGGETIINNSHHLWRGYEAMHEKLNSCGADISISS</sequence>
<evidence type="ECO:0000255" key="1">
    <source>
        <dbReference type="HAMAP-Rule" id="MF_00111"/>
    </source>
</evidence>
<feature type="chain" id="PRO_1000119128" description="UDP-N-acetylglucosamine 1-carboxyvinyltransferase">
    <location>
        <begin position="1"/>
        <end position="425"/>
    </location>
</feature>
<feature type="active site" description="Proton donor" evidence="1">
    <location>
        <position position="124"/>
    </location>
</feature>
<feature type="binding site" evidence="1">
    <location>
        <begin position="23"/>
        <end position="24"/>
    </location>
    <ligand>
        <name>phosphoenolpyruvate</name>
        <dbReference type="ChEBI" id="CHEBI:58702"/>
    </ligand>
</feature>
<feature type="binding site" evidence="1">
    <location>
        <position position="100"/>
    </location>
    <ligand>
        <name>UDP-N-acetyl-alpha-D-glucosamine</name>
        <dbReference type="ChEBI" id="CHEBI:57705"/>
    </ligand>
</feature>
<feature type="binding site" evidence="1">
    <location>
        <position position="313"/>
    </location>
    <ligand>
        <name>UDP-N-acetyl-alpha-D-glucosamine</name>
        <dbReference type="ChEBI" id="CHEBI:57705"/>
    </ligand>
</feature>
<feature type="binding site" evidence="1">
    <location>
        <position position="335"/>
    </location>
    <ligand>
        <name>UDP-N-acetyl-alpha-D-glucosamine</name>
        <dbReference type="ChEBI" id="CHEBI:57705"/>
    </ligand>
</feature>
<feature type="modified residue" description="2-(S-cysteinyl)pyruvic acid O-phosphothioketal" evidence="1">
    <location>
        <position position="124"/>
    </location>
</feature>
<comment type="function">
    <text evidence="1">Cell wall formation. Adds enolpyruvyl to UDP-N-acetylglucosamine.</text>
</comment>
<comment type="catalytic activity">
    <reaction evidence="1">
        <text>phosphoenolpyruvate + UDP-N-acetyl-alpha-D-glucosamine = UDP-N-acetyl-3-O-(1-carboxyvinyl)-alpha-D-glucosamine + phosphate</text>
        <dbReference type="Rhea" id="RHEA:18681"/>
        <dbReference type="ChEBI" id="CHEBI:43474"/>
        <dbReference type="ChEBI" id="CHEBI:57705"/>
        <dbReference type="ChEBI" id="CHEBI:58702"/>
        <dbReference type="ChEBI" id="CHEBI:68483"/>
        <dbReference type="EC" id="2.5.1.7"/>
    </reaction>
</comment>
<comment type="pathway">
    <text evidence="1">Cell wall biogenesis; peptidoglycan biosynthesis.</text>
</comment>
<comment type="subcellular location">
    <subcellularLocation>
        <location evidence="1">Cytoplasm</location>
    </subcellularLocation>
</comment>
<comment type="similarity">
    <text evidence="1">Belongs to the EPSP synthase family. MurA subfamily.</text>
</comment>
<keyword id="KW-0131">Cell cycle</keyword>
<keyword id="KW-0132">Cell division</keyword>
<keyword id="KW-0133">Cell shape</keyword>
<keyword id="KW-0961">Cell wall biogenesis/degradation</keyword>
<keyword id="KW-0963">Cytoplasm</keyword>
<keyword id="KW-0573">Peptidoglycan synthesis</keyword>
<keyword id="KW-0670">Pyruvate</keyword>
<keyword id="KW-0808">Transferase</keyword>
<proteinExistence type="inferred from homology"/>
<name>MURA_WOLWR</name>
<organism>
    <name type="scientific">Wolbachia sp. subsp. Drosophila simulans (strain wRi)</name>
    <dbReference type="NCBI Taxonomy" id="66084"/>
    <lineage>
        <taxon>Bacteria</taxon>
        <taxon>Pseudomonadati</taxon>
        <taxon>Pseudomonadota</taxon>
        <taxon>Alphaproteobacteria</taxon>
        <taxon>Rickettsiales</taxon>
        <taxon>Anaplasmataceae</taxon>
        <taxon>Wolbachieae</taxon>
        <taxon>Wolbachia</taxon>
    </lineage>
</organism>
<accession>C0R4M1</accession>
<gene>
    <name evidence="1" type="primary">murA</name>
    <name type="ordered locus">WRi_011710</name>
</gene>
<reference key="1">
    <citation type="journal article" date="2009" name="Proc. Natl. Acad. Sci. U.S.A.">
        <title>The mosaic genome structure of the Wolbachia wRi strain infecting Drosophila simulans.</title>
        <authorList>
            <person name="Klasson L."/>
            <person name="Westberg J."/>
            <person name="Sapountzis P."/>
            <person name="Naeslund K."/>
            <person name="Lutnaes Y."/>
            <person name="Darby A.C."/>
            <person name="Veneti Z."/>
            <person name="Chen L."/>
            <person name="Braig H.R."/>
            <person name="Garrett R."/>
            <person name="Bourtzis K."/>
            <person name="Andersson S.G."/>
        </authorList>
    </citation>
    <scope>NUCLEOTIDE SEQUENCE [LARGE SCALE GENOMIC DNA]</scope>
    <source>
        <strain>wRi</strain>
    </source>
</reference>
<protein>
    <recommendedName>
        <fullName evidence="1">UDP-N-acetylglucosamine 1-carboxyvinyltransferase</fullName>
        <ecNumber evidence="1">2.5.1.7</ecNumber>
    </recommendedName>
    <alternativeName>
        <fullName evidence="1">Enoylpyruvate transferase</fullName>
    </alternativeName>
    <alternativeName>
        <fullName evidence="1">UDP-N-acetylglucosamine enolpyruvyl transferase</fullName>
        <shortName evidence="1">EPT</shortName>
    </alternativeName>
</protein>